<sequence>MLLLDCNPEVDSLKHLLETGASVNAPPDPCEQSPVHLAAGGGLACFLLWQLQTGADLNQQDVFGEAPLHKAARVGSMECLSLLVASDAQIDLCNKNGQTAEDLAWSCGFPECAKFLTTIKCMQTIKSREQPNKDHCVQVLRLKRSFGSEEYTSGKRKC</sequence>
<gene>
    <name type="primary">ANKRD37</name>
</gene>
<keyword id="KW-0040">ANK repeat</keyword>
<keyword id="KW-0963">Cytoplasm</keyword>
<keyword id="KW-0539">Nucleus</keyword>
<keyword id="KW-1185">Reference proteome</keyword>
<keyword id="KW-0677">Repeat</keyword>
<keyword id="KW-0832">Ubl conjugation</keyword>
<accession>Q0VC93</accession>
<organism>
    <name type="scientific">Bos taurus</name>
    <name type="common">Bovine</name>
    <dbReference type="NCBI Taxonomy" id="9913"/>
    <lineage>
        <taxon>Eukaryota</taxon>
        <taxon>Metazoa</taxon>
        <taxon>Chordata</taxon>
        <taxon>Craniata</taxon>
        <taxon>Vertebrata</taxon>
        <taxon>Euteleostomi</taxon>
        <taxon>Mammalia</taxon>
        <taxon>Eutheria</taxon>
        <taxon>Laurasiatheria</taxon>
        <taxon>Artiodactyla</taxon>
        <taxon>Ruminantia</taxon>
        <taxon>Pecora</taxon>
        <taxon>Bovidae</taxon>
        <taxon>Bovinae</taxon>
        <taxon>Bos</taxon>
    </lineage>
</organism>
<comment type="subcellular location">
    <subcellularLocation>
        <location evidence="2">Nucleus</location>
    </subcellularLocation>
    <subcellularLocation>
        <location evidence="2">Cytoplasm</location>
    </subcellularLocation>
</comment>
<comment type="PTM">
    <text evidence="1">Ubiquitinated by the CRL2(FEM1B) complex, leading to its degradation.</text>
</comment>
<protein>
    <recommendedName>
        <fullName>Ankyrin repeat domain-containing protein 37</fullName>
    </recommendedName>
</protein>
<dbReference type="EMBL" id="BC120289">
    <property type="protein sequence ID" value="AAI20290.1"/>
    <property type="molecule type" value="mRNA"/>
</dbReference>
<dbReference type="RefSeq" id="NP_001068860.1">
    <property type="nucleotide sequence ID" value="NM_001075392.1"/>
</dbReference>
<dbReference type="SMR" id="Q0VC93"/>
<dbReference type="FunCoup" id="Q0VC93">
    <property type="interactions" value="1"/>
</dbReference>
<dbReference type="STRING" id="9913.ENSBTAP00000024559"/>
<dbReference type="PaxDb" id="9913-ENSBTAP00000024559"/>
<dbReference type="GeneID" id="509139"/>
<dbReference type="KEGG" id="bta:509139"/>
<dbReference type="CTD" id="353322"/>
<dbReference type="VEuPathDB" id="HostDB:ENSBTAG00000018453"/>
<dbReference type="eggNOG" id="KOG0504">
    <property type="taxonomic scope" value="Eukaryota"/>
</dbReference>
<dbReference type="HOGENOM" id="CLU_000134_42_0_1"/>
<dbReference type="InParanoid" id="Q0VC93"/>
<dbReference type="OMA" id="CNPEADG"/>
<dbReference type="OrthoDB" id="5402602at2759"/>
<dbReference type="TreeFam" id="TF338463"/>
<dbReference type="Proteomes" id="UP000009136">
    <property type="component" value="Chromosome 27"/>
</dbReference>
<dbReference type="Bgee" id="ENSBTAG00000018453">
    <property type="expression patterns" value="Expressed in semen and 102 other cell types or tissues"/>
</dbReference>
<dbReference type="GO" id="GO:0005737">
    <property type="term" value="C:cytoplasm"/>
    <property type="evidence" value="ECO:0000318"/>
    <property type="project" value="GO_Central"/>
</dbReference>
<dbReference type="GO" id="GO:0005634">
    <property type="term" value="C:nucleus"/>
    <property type="evidence" value="ECO:0007669"/>
    <property type="project" value="UniProtKB-SubCell"/>
</dbReference>
<dbReference type="FunFam" id="1.25.40.20:FF:000234">
    <property type="entry name" value="ankyrin repeat domain-containing protein 37 isoform X2"/>
    <property type="match status" value="1"/>
</dbReference>
<dbReference type="Gene3D" id="1.25.40.20">
    <property type="entry name" value="Ankyrin repeat-containing domain"/>
    <property type="match status" value="1"/>
</dbReference>
<dbReference type="InterPro" id="IPR050776">
    <property type="entry name" value="Ank_Repeat/CDKN_Inhibitor"/>
</dbReference>
<dbReference type="InterPro" id="IPR002110">
    <property type="entry name" value="Ankyrin_rpt"/>
</dbReference>
<dbReference type="InterPro" id="IPR036770">
    <property type="entry name" value="Ankyrin_rpt-contain_sf"/>
</dbReference>
<dbReference type="PANTHER" id="PTHR24201">
    <property type="entry name" value="ANK_REP_REGION DOMAIN-CONTAINING PROTEIN"/>
    <property type="match status" value="1"/>
</dbReference>
<dbReference type="PANTHER" id="PTHR24201:SF0">
    <property type="entry name" value="ANKYRIN REPEAT DOMAIN-CONTAINING PROTEIN 37"/>
    <property type="match status" value="1"/>
</dbReference>
<dbReference type="Pfam" id="PF12796">
    <property type="entry name" value="Ank_2"/>
    <property type="match status" value="1"/>
</dbReference>
<dbReference type="SMART" id="SM00248">
    <property type="entry name" value="ANK"/>
    <property type="match status" value="2"/>
</dbReference>
<dbReference type="SUPFAM" id="SSF48403">
    <property type="entry name" value="Ankyrin repeat"/>
    <property type="match status" value="1"/>
</dbReference>
<dbReference type="PROSITE" id="PS50297">
    <property type="entry name" value="ANK_REP_REGION"/>
    <property type="match status" value="1"/>
</dbReference>
<dbReference type="PROSITE" id="PS50088">
    <property type="entry name" value="ANK_REPEAT"/>
    <property type="match status" value="1"/>
</dbReference>
<name>ANR37_BOVIN</name>
<proteinExistence type="evidence at transcript level"/>
<feature type="chain" id="PRO_0000283057" description="Ankyrin repeat domain-containing protein 37">
    <location>
        <begin position="1"/>
        <end position="158"/>
    </location>
</feature>
<feature type="repeat" description="ANK 1">
    <location>
        <begin position="1"/>
        <end position="25"/>
    </location>
</feature>
<feature type="repeat" description="ANK 2">
    <location>
        <begin position="30"/>
        <end position="59"/>
    </location>
</feature>
<feature type="repeat" description="ANK 3">
    <location>
        <begin position="63"/>
        <end position="92"/>
    </location>
</feature>
<feature type="short sequence motif" description="Nuclear localization signal" evidence="1">
    <location>
        <begin position="129"/>
        <end position="149"/>
    </location>
</feature>
<reference key="1">
    <citation type="submission" date="2006-08" db="EMBL/GenBank/DDBJ databases">
        <authorList>
            <consortium name="NIH - Mammalian Gene Collection (MGC) project"/>
        </authorList>
    </citation>
    <scope>NUCLEOTIDE SEQUENCE [LARGE SCALE MRNA]</scope>
    <source>
        <strain>Hereford</strain>
        <tissue>Fetal spinal cord</tissue>
    </source>
</reference>
<evidence type="ECO:0000250" key="1">
    <source>
        <dbReference type="UniProtKB" id="Q569N2"/>
    </source>
</evidence>
<evidence type="ECO:0000250" key="2">
    <source>
        <dbReference type="UniProtKB" id="Q7Z713"/>
    </source>
</evidence>